<gene>
    <name evidence="3" type="primary">CYP73A33</name>
    <name evidence="5" type="synonym">C4H</name>
    <name evidence="3" type="synonym">C4H1</name>
    <name evidence="6" type="ORF">SORBI_3002G126600</name>
</gene>
<keyword id="KW-0002">3D-structure</keyword>
<keyword id="KW-0349">Heme</keyword>
<keyword id="KW-0408">Iron</keyword>
<keyword id="KW-0472">Membrane</keyword>
<keyword id="KW-0479">Metal-binding</keyword>
<keyword id="KW-0503">Monooxygenase</keyword>
<keyword id="KW-0560">Oxidoreductase</keyword>
<keyword id="KW-1185">Reference proteome</keyword>
<keyword id="KW-0812">Transmembrane</keyword>
<keyword id="KW-1133">Transmembrane helix</keyword>
<organism>
    <name type="scientific">Sorghum bicolor</name>
    <name type="common">Sorghum</name>
    <name type="synonym">Sorghum vulgare</name>
    <dbReference type="NCBI Taxonomy" id="4558"/>
    <lineage>
        <taxon>Eukaryota</taxon>
        <taxon>Viridiplantae</taxon>
        <taxon>Streptophyta</taxon>
        <taxon>Embryophyta</taxon>
        <taxon>Tracheophyta</taxon>
        <taxon>Spermatophyta</taxon>
        <taxon>Magnoliopsida</taxon>
        <taxon>Liliopsida</taxon>
        <taxon>Poales</taxon>
        <taxon>Poaceae</taxon>
        <taxon>PACMAD clade</taxon>
        <taxon>Panicoideae</taxon>
        <taxon>Andropogonodae</taxon>
        <taxon>Andropogoneae</taxon>
        <taxon>Sorghinae</taxon>
        <taxon>Sorghum</taxon>
    </lineage>
</organism>
<feature type="chain" id="PRO_0000451427" description="Trans-cinnamate 4-monooxygenase">
    <location>
        <begin position="1"/>
        <end position="501"/>
    </location>
</feature>
<feature type="transmembrane region" description="Helical" evidence="1">
    <location>
        <begin position="3"/>
        <end position="23"/>
    </location>
</feature>
<feature type="binding site" evidence="2">
    <location>
        <begin position="213"/>
        <end position="218"/>
    </location>
    <ligand>
        <name>(E)-cinnamate</name>
        <dbReference type="ChEBI" id="CHEBI:15669"/>
    </ligand>
</feature>
<feature type="binding site" evidence="2">
    <location>
        <position position="302"/>
    </location>
    <ligand>
        <name>(E)-cinnamate</name>
        <dbReference type="ChEBI" id="CHEBI:15669"/>
    </ligand>
</feature>
<feature type="binding site" description="axial binding residue" evidence="2">
    <location>
        <position position="443"/>
    </location>
    <ligand>
        <name>heme</name>
        <dbReference type="ChEBI" id="CHEBI:30413"/>
    </ligand>
    <ligandPart>
        <name>Fe</name>
        <dbReference type="ChEBI" id="CHEBI:18248"/>
    </ligandPart>
</feature>
<feature type="turn" evidence="7">
    <location>
        <begin position="41"/>
        <end position="43"/>
    </location>
</feature>
<feature type="helix" evidence="7">
    <location>
        <begin position="46"/>
        <end position="49"/>
    </location>
</feature>
<feature type="helix" evidence="7">
    <location>
        <begin position="55"/>
        <end position="65"/>
    </location>
</feature>
<feature type="strand" evidence="7">
    <location>
        <begin position="67"/>
        <end position="73"/>
    </location>
</feature>
<feature type="strand" evidence="7">
    <location>
        <begin position="76"/>
        <end position="81"/>
    </location>
</feature>
<feature type="helix" evidence="7">
    <location>
        <begin position="84"/>
        <end position="91"/>
    </location>
</feature>
<feature type="turn" evidence="7">
    <location>
        <begin position="92"/>
        <end position="98"/>
    </location>
</feature>
<feature type="helix" evidence="7">
    <location>
        <begin position="105"/>
        <end position="111"/>
    </location>
</feature>
<feature type="turn" evidence="7">
    <location>
        <begin position="112"/>
        <end position="114"/>
    </location>
</feature>
<feature type="helix" evidence="7">
    <location>
        <begin position="124"/>
        <end position="137"/>
    </location>
</feature>
<feature type="helix" evidence="7">
    <location>
        <begin position="140"/>
        <end position="163"/>
    </location>
</feature>
<feature type="helix" evidence="7">
    <location>
        <begin position="165"/>
        <end position="168"/>
    </location>
</feature>
<feature type="helix" evidence="7">
    <location>
        <begin position="175"/>
        <end position="191"/>
    </location>
</feature>
<feature type="helix" evidence="7">
    <location>
        <begin position="201"/>
        <end position="218"/>
    </location>
</feature>
<feature type="helix" evidence="7">
    <location>
        <begin position="220"/>
        <end position="222"/>
    </location>
</feature>
<feature type="helix" evidence="7">
    <location>
        <begin position="223"/>
        <end position="227"/>
    </location>
</feature>
<feature type="helix" evidence="7">
    <location>
        <begin position="229"/>
        <end position="235"/>
    </location>
</feature>
<feature type="helix" evidence="7">
    <location>
        <begin position="236"/>
        <end position="256"/>
    </location>
</feature>
<feature type="helix" evidence="7">
    <location>
        <begin position="258"/>
        <end position="268"/>
    </location>
</feature>
<feature type="helix" evidence="7">
    <location>
        <begin position="274"/>
        <end position="283"/>
    </location>
</feature>
<feature type="helix" evidence="7">
    <location>
        <begin position="289"/>
        <end position="302"/>
    </location>
</feature>
<feature type="helix" evidence="7">
    <location>
        <begin position="304"/>
        <end position="320"/>
    </location>
</feature>
<feature type="helix" evidence="7">
    <location>
        <begin position="322"/>
        <end position="336"/>
    </location>
</feature>
<feature type="helix" evidence="7">
    <location>
        <begin position="344"/>
        <end position="349"/>
    </location>
</feature>
<feature type="helix" evidence="7">
    <location>
        <begin position="351"/>
        <end position="363"/>
    </location>
</feature>
<feature type="strand" evidence="7">
    <location>
        <begin position="379"/>
        <end position="381"/>
    </location>
</feature>
<feature type="strand" evidence="7">
    <location>
        <begin position="384"/>
        <end position="386"/>
    </location>
</feature>
<feature type="strand" evidence="7">
    <location>
        <begin position="391"/>
        <end position="394"/>
    </location>
</feature>
<feature type="helix" evidence="7">
    <location>
        <begin position="396"/>
        <end position="401"/>
    </location>
</feature>
<feature type="turn" evidence="7">
    <location>
        <begin position="403"/>
        <end position="405"/>
    </location>
</feature>
<feature type="strand" evidence="7">
    <location>
        <begin position="406"/>
        <end position="408"/>
    </location>
</feature>
<feature type="helix" evidence="7">
    <location>
        <begin position="414"/>
        <end position="418"/>
    </location>
</feature>
<feature type="turn" evidence="7">
    <location>
        <begin position="419"/>
        <end position="423"/>
    </location>
</feature>
<feature type="helix" evidence="7">
    <location>
        <begin position="446"/>
        <end position="463"/>
    </location>
</feature>
<feature type="strand" evidence="7">
    <location>
        <begin position="464"/>
        <end position="467"/>
    </location>
</feature>
<feature type="strand" evidence="7">
    <location>
        <begin position="479"/>
        <end position="481"/>
    </location>
</feature>
<feature type="strand" evidence="7">
    <location>
        <begin position="486"/>
        <end position="490"/>
    </location>
</feature>
<feature type="strand" evidence="7">
    <location>
        <begin position="493"/>
        <end position="498"/>
    </location>
</feature>
<sequence>MDLVLLEKALLGLFAAAVLAVAVAKLTGKRYRLPPGPAGAPVVGNWLQVGDDLNHRNLMSLAKRFGDIFLLRMGVRNLVVVSTPELAKEVLHTQGVEFGSRTRNVVFDIFTGKGQDMVFTVYGDHWRKMRRIMTVPFFTNKVVAQNRVGWEEEARLVVEDVRKDPRAAAEGVVIRRRLQLMMYNDMFRIMFDTRFESEQDPLFNKLKALNAERSRLSQSFEYNYGDFIPVLRPFLRGYLNRCHDLKTRRMKVFEDNFVQERKKVMAQTGEIRCAMDHILEAERKGEINHDNVLYIVENINVAAIETTLWSIEWGIAELVNHPAIQSKLREEMDSVLGAGVPVTEPDLERLPYLQAIVKETLRLRMAIPLLVPHMNLNDGKLAGYDIPAESKILVNAWFLANDPKRWVRPDEFRPERFLEEEKTVEAHGNDFRFVPFGVGRRSCPGIILALPIIGITLGRLVQNFQLLPPPGQDKIDTTEKPGQFSNQIAKHATIVCKPLEA</sequence>
<reference key="1">
    <citation type="submission" date="2001-05" db="EMBL/GenBank/DDBJ databases">
        <title>Isolation of a C4H cDNA from Sorghum.</title>
        <authorList>
            <person name="Lauer B."/>
            <person name="Nicholson R."/>
            <person name="Coolbaugh R."/>
        </authorList>
    </citation>
    <scope>NUCLEOTIDE SEQUENCE [MRNA]</scope>
</reference>
<reference key="2">
    <citation type="journal article" date="2009" name="Nature">
        <title>The Sorghum bicolor genome and the diversification of grasses.</title>
        <authorList>
            <person name="Paterson A.H."/>
            <person name="Bowers J.E."/>
            <person name="Bruggmann R."/>
            <person name="Dubchak I."/>
            <person name="Grimwood J."/>
            <person name="Gundlach H."/>
            <person name="Haberer G."/>
            <person name="Hellsten U."/>
            <person name="Mitros T."/>
            <person name="Poliakov A."/>
            <person name="Schmutz J."/>
            <person name="Spannagl M."/>
            <person name="Tang H."/>
            <person name="Wang X."/>
            <person name="Wicker T."/>
            <person name="Bharti A.K."/>
            <person name="Chapman J."/>
            <person name="Feltus F.A."/>
            <person name="Gowik U."/>
            <person name="Grigoriev I.V."/>
            <person name="Lyons E."/>
            <person name="Maher C.A."/>
            <person name="Martis M."/>
            <person name="Narechania A."/>
            <person name="Otillar R.P."/>
            <person name="Penning B.W."/>
            <person name="Salamov A.A."/>
            <person name="Wang Y."/>
            <person name="Zhang L."/>
            <person name="Carpita N.C."/>
            <person name="Freeling M."/>
            <person name="Gingle A.R."/>
            <person name="Hash C.T."/>
            <person name="Keller B."/>
            <person name="Klein P."/>
            <person name="Kresovich S."/>
            <person name="McCann M.C."/>
            <person name="Ming R."/>
            <person name="Peterson D.G."/>
            <person name="Mehboob-ur-Rahman M."/>
            <person name="Ware D."/>
            <person name="Westhoff P."/>
            <person name="Mayer K.F.X."/>
            <person name="Messing J."/>
            <person name="Rokhsar D.S."/>
        </authorList>
    </citation>
    <scope>NUCLEOTIDE SEQUENCE [LARGE SCALE GENOMIC DNA]</scope>
    <source>
        <strain>cv. BTx623</strain>
    </source>
</reference>
<reference key="3">
    <citation type="journal article" date="2018" name="Plant J.">
        <title>The Sorghum bicolor reference genome: improved assembly, gene annotations, a transcriptome atlas, and signatures of genome organization.</title>
        <authorList>
            <person name="McCormick R.F."/>
            <person name="Truong S.K."/>
            <person name="Sreedasyam A."/>
            <person name="Jenkins J."/>
            <person name="Shu S."/>
            <person name="Sims D."/>
            <person name="Kennedy M."/>
            <person name="Amirebrahimi M."/>
            <person name="Weers B.D."/>
            <person name="McKinley B."/>
            <person name="Mattison A."/>
            <person name="Morishige D.T."/>
            <person name="Grimwood J."/>
            <person name="Schmutz J."/>
            <person name="Mullet J.E."/>
        </authorList>
    </citation>
    <scope>GENOME REANNOTATION</scope>
    <source>
        <strain>cv. BTx623</strain>
    </source>
</reference>
<reference key="4">
    <citation type="journal article" date="2020" name="Plant Physiol.">
        <title>Structure and function of the cytochrome P450 monooxygenase cinnamate 4-hydroxylase from Sorghum bicolor.</title>
        <authorList>
            <person name="Zhang B."/>
            <person name="Lewis K.M."/>
            <person name="Abril A."/>
            <person name="Davydov D.R."/>
            <person name="Vermerris W."/>
            <person name="Sattler S.E."/>
            <person name="Kang C."/>
        </authorList>
    </citation>
    <scope>X-RAY CRYSTALLOGRAPHY (1.70 ANGSTROMS) IN COMPLEX WITH HEME</scope>
    <scope>FUNCTION</scope>
    <scope>CATALYTIC ACTIVITY</scope>
    <scope>BIOPHYSICOCHEMICAL PROPERTIES</scope>
</reference>
<accession>Q94IP1</accession>
<name>TCMO_SORBI</name>
<proteinExistence type="evidence at protein level"/>
<protein>
    <recommendedName>
        <fullName evidence="4">Trans-cinnamate 4-monooxygenase</fullName>
        <ecNumber evidence="2">1.14.14.91</ecNumber>
    </recommendedName>
    <alternativeName>
        <fullName evidence="3">Cinnamic acid 4-hydroxylase</fullName>
        <shortName evidence="5">C4H</shortName>
        <shortName evidence="4">CA4H</shortName>
    </alternativeName>
    <alternativeName>
        <fullName evidence="3">Cinnamic acid 4-hydroxylase 1</fullName>
        <shortName evidence="3">SbC4H1</shortName>
    </alternativeName>
    <alternativeName>
        <fullName evidence="4">Cytochrome P450 73A33</fullName>
    </alternativeName>
    <alternativeName>
        <fullName evidence="4">Cytochrome P450C4H</fullName>
    </alternativeName>
</protein>
<evidence type="ECO:0000255" key="1"/>
<evidence type="ECO:0000269" key="2">
    <source>
    </source>
</evidence>
<evidence type="ECO:0000303" key="3">
    <source>
    </source>
</evidence>
<evidence type="ECO:0000305" key="4"/>
<evidence type="ECO:0000312" key="5">
    <source>
        <dbReference type="EMBL" id="AAK54447.1"/>
    </source>
</evidence>
<evidence type="ECO:0000312" key="6">
    <source>
        <dbReference type="EMBL" id="EER98460.1"/>
    </source>
</evidence>
<evidence type="ECO:0007829" key="7">
    <source>
        <dbReference type="PDB" id="6VBY"/>
    </source>
</evidence>
<comment type="function">
    <text evidence="2">Catalyzes the first oxidative step of the phenylpropanoid pathway in higher plants by transforming trans-cinnamate into p-coumarate (PubMed:32332088). The compounds formed by this pathway are essential components for lignification, pollination, and defense against ultraviolet light, predators and pathogens (PubMed:32332088). Can also use 2-naphthoic acid as substrate (PubMed:32332088).</text>
</comment>
<comment type="catalytic activity">
    <reaction evidence="2">
        <text>(E)-cinnamate + reduced [NADPH--hemoprotein reductase] + O2 = (E)-4-coumarate + oxidized [NADPH--hemoprotein reductase] + H2O + H(+)</text>
        <dbReference type="Rhea" id="RHEA:10608"/>
        <dbReference type="Rhea" id="RHEA-COMP:11964"/>
        <dbReference type="Rhea" id="RHEA-COMP:11965"/>
        <dbReference type="ChEBI" id="CHEBI:12876"/>
        <dbReference type="ChEBI" id="CHEBI:15377"/>
        <dbReference type="ChEBI" id="CHEBI:15378"/>
        <dbReference type="ChEBI" id="CHEBI:15379"/>
        <dbReference type="ChEBI" id="CHEBI:15669"/>
        <dbReference type="ChEBI" id="CHEBI:57618"/>
        <dbReference type="ChEBI" id="CHEBI:58210"/>
        <dbReference type="EC" id="1.14.14.91"/>
    </reaction>
    <physiologicalReaction direction="left-to-right" evidence="2">
        <dbReference type="Rhea" id="RHEA:10609"/>
    </physiologicalReaction>
</comment>
<comment type="cofactor">
    <cofactor evidence="2">
        <name>heme</name>
        <dbReference type="ChEBI" id="CHEBI:30413"/>
    </cofactor>
</comment>
<comment type="biophysicochemical properties">
    <kinetics>
        <KM evidence="2">0.61 uM for trans-cinnamate</KM>
        <KM evidence="2">0.76 uM for 2-naphthoic acid</KM>
    </kinetics>
</comment>
<comment type="pathway">
    <text evidence="4">Phenylpropanoid metabolism; trans-4-coumarate biosynthesis; trans-4-coumarate from trans-cinnamate: step 1/1.</text>
</comment>
<comment type="subcellular location">
    <subcellularLocation>
        <location evidence="1">Membrane</location>
        <topology evidence="1">Single-pass membrane protein</topology>
    </subcellularLocation>
</comment>
<comment type="similarity">
    <text evidence="4">Belongs to the cytochrome P450 family.</text>
</comment>
<dbReference type="EC" id="1.14.14.91" evidence="2"/>
<dbReference type="EMBL" id="AY034143">
    <property type="protein sequence ID" value="AAK54447.1"/>
    <property type="molecule type" value="mRNA"/>
</dbReference>
<dbReference type="EMBL" id="CM000761">
    <property type="protein sequence ID" value="EER98460.1"/>
    <property type="molecule type" value="Genomic_DNA"/>
</dbReference>
<dbReference type="RefSeq" id="XP_002461939.1">
    <property type="nucleotide sequence ID" value="XM_002461894.1"/>
</dbReference>
<dbReference type="PDB" id="6VBY">
    <property type="method" value="X-ray"/>
    <property type="resolution" value="1.70 A"/>
    <property type="chains" value="A=1-501"/>
</dbReference>
<dbReference type="PDBsum" id="6VBY"/>
<dbReference type="SMR" id="Q94IP1"/>
<dbReference type="FunCoup" id="Q94IP1">
    <property type="interactions" value="519"/>
</dbReference>
<dbReference type="STRING" id="4558.Q94IP1"/>
<dbReference type="EnsemblPlants" id="EER98460">
    <property type="protein sequence ID" value="EER98460"/>
    <property type="gene ID" value="SORBI_3002G126600"/>
</dbReference>
<dbReference type="GeneID" id="8059757"/>
<dbReference type="Gramene" id="EER98460">
    <property type="protein sequence ID" value="EER98460"/>
    <property type="gene ID" value="SORBI_3002G126600"/>
</dbReference>
<dbReference type="KEGG" id="sbi:8059757"/>
<dbReference type="eggNOG" id="KOG0156">
    <property type="taxonomic scope" value="Eukaryota"/>
</dbReference>
<dbReference type="HOGENOM" id="CLU_001570_4_0_1"/>
<dbReference type="InParanoid" id="Q94IP1"/>
<dbReference type="OMA" id="VPHMNLA"/>
<dbReference type="OrthoDB" id="1470350at2759"/>
<dbReference type="SABIO-RK" id="Q94IP1"/>
<dbReference type="UniPathway" id="UPA00825">
    <property type="reaction ID" value="UER00789"/>
</dbReference>
<dbReference type="Proteomes" id="UP000000768">
    <property type="component" value="Chromosome 2"/>
</dbReference>
<dbReference type="GO" id="GO:0016020">
    <property type="term" value="C:membrane"/>
    <property type="evidence" value="ECO:0007669"/>
    <property type="project" value="UniProtKB-SubCell"/>
</dbReference>
<dbReference type="GO" id="GO:0020037">
    <property type="term" value="F:heme binding"/>
    <property type="evidence" value="ECO:0000314"/>
    <property type="project" value="UniProtKB"/>
</dbReference>
<dbReference type="GO" id="GO:0005506">
    <property type="term" value="F:iron ion binding"/>
    <property type="evidence" value="ECO:0007669"/>
    <property type="project" value="InterPro"/>
</dbReference>
<dbReference type="GO" id="GO:0016710">
    <property type="term" value="F:trans-cinnamate 4-monooxygenase activity"/>
    <property type="evidence" value="ECO:0000314"/>
    <property type="project" value="UniProtKB"/>
</dbReference>
<dbReference type="GO" id="GO:0009808">
    <property type="term" value="P:lignin metabolic process"/>
    <property type="evidence" value="ECO:0000314"/>
    <property type="project" value="UniProtKB"/>
</dbReference>
<dbReference type="CDD" id="cd11074">
    <property type="entry name" value="CYP73"/>
    <property type="match status" value="1"/>
</dbReference>
<dbReference type="FunFam" id="1.10.630.10:FF:000013">
    <property type="entry name" value="Trans-cinnamate 4-monooxygenase"/>
    <property type="match status" value="1"/>
</dbReference>
<dbReference type="Gene3D" id="1.10.630.10">
    <property type="entry name" value="Cytochrome P450"/>
    <property type="match status" value="1"/>
</dbReference>
<dbReference type="InterPro" id="IPR001128">
    <property type="entry name" value="Cyt_P450"/>
</dbReference>
<dbReference type="InterPro" id="IPR017972">
    <property type="entry name" value="Cyt_P450_CS"/>
</dbReference>
<dbReference type="InterPro" id="IPR002401">
    <property type="entry name" value="Cyt_P450_E_grp-I"/>
</dbReference>
<dbReference type="InterPro" id="IPR036396">
    <property type="entry name" value="Cyt_P450_sf"/>
</dbReference>
<dbReference type="PANTHER" id="PTHR47948">
    <property type="entry name" value="TRANS-CINNAMATE 4-MONOOXYGENASE"/>
    <property type="match status" value="1"/>
</dbReference>
<dbReference type="PANTHER" id="PTHR47948:SF1">
    <property type="entry name" value="TRANS-CINNAMATE 4-MONOOXYGENASE"/>
    <property type="match status" value="1"/>
</dbReference>
<dbReference type="Pfam" id="PF00067">
    <property type="entry name" value="p450"/>
    <property type="match status" value="1"/>
</dbReference>
<dbReference type="PRINTS" id="PR00463">
    <property type="entry name" value="EP450I"/>
</dbReference>
<dbReference type="PRINTS" id="PR00385">
    <property type="entry name" value="P450"/>
</dbReference>
<dbReference type="SUPFAM" id="SSF48264">
    <property type="entry name" value="Cytochrome P450"/>
    <property type="match status" value="1"/>
</dbReference>
<dbReference type="PROSITE" id="PS00086">
    <property type="entry name" value="CYTOCHROME_P450"/>
    <property type="match status" value="1"/>
</dbReference>